<accession>B2HSF4</accession>
<evidence type="ECO:0000250" key="1"/>
<evidence type="ECO:0000305" key="2"/>
<reference key="1">
    <citation type="journal article" date="2008" name="Genome Res.">
        <title>Insights from the complete genome sequence of Mycobacterium marinum on the evolution of Mycobacterium tuberculosis.</title>
        <authorList>
            <person name="Stinear T.P."/>
            <person name="Seemann T."/>
            <person name="Harrison P.F."/>
            <person name="Jenkin G.A."/>
            <person name="Davies J.K."/>
            <person name="Johnson P.D."/>
            <person name="Abdellah Z."/>
            <person name="Arrowsmith C."/>
            <person name="Chillingworth T."/>
            <person name="Churcher C."/>
            <person name="Clarke K."/>
            <person name="Cronin A."/>
            <person name="Davis P."/>
            <person name="Goodhead I."/>
            <person name="Holroyd N."/>
            <person name="Jagels K."/>
            <person name="Lord A."/>
            <person name="Moule S."/>
            <person name="Mungall K."/>
            <person name="Norbertczak H."/>
            <person name="Quail M.A."/>
            <person name="Rabbinowitsch E."/>
            <person name="Walker D."/>
            <person name="White B."/>
            <person name="Whitehead S."/>
            <person name="Small P.L."/>
            <person name="Brosch R."/>
            <person name="Ramakrishnan L."/>
            <person name="Fischbach M.A."/>
            <person name="Parkhill J."/>
            <person name="Cole S.T."/>
        </authorList>
    </citation>
    <scope>NUCLEOTIDE SEQUENCE [LARGE SCALE GENOMIC DNA]</scope>
    <source>
        <strain>ATCC BAA-535 / M</strain>
    </source>
</reference>
<keyword id="KW-0489">Methyltransferase</keyword>
<keyword id="KW-1185">Reference proteome</keyword>
<keyword id="KW-0949">S-adenosyl-L-methionine</keyword>
<keyword id="KW-0808">Transferase</keyword>
<dbReference type="EC" id="2.1.1.-"/>
<dbReference type="EMBL" id="CP000854">
    <property type="protein sequence ID" value="ACC39412.1"/>
    <property type="molecule type" value="Genomic_DNA"/>
</dbReference>
<dbReference type="RefSeq" id="WP_012392874.1">
    <property type="nucleotide sequence ID" value="NC_010612.1"/>
</dbReference>
<dbReference type="SMR" id="B2HSF4"/>
<dbReference type="STRING" id="216594.MMAR_0955"/>
<dbReference type="KEGG" id="mmi:MMAR_0955"/>
<dbReference type="eggNOG" id="COG3315">
    <property type="taxonomic scope" value="Bacteria"/>
</dbReference>
<dbReference type="HOGENOM" id="CLU_056160_2_1_11"/>
<dbReference type="OrthoDB" id="9806164at2"/>
<dbReference type="Proteomes" id="UP000001190">
    <property type="component" value="Chromosome"/>
</dbReference>
<dbReference type="GO" id="GO:0008168">
    <property type="term" value="F:methyltransferase activity"/>
    <property type="evidence" value="ECO:0007669"/>
    <property type="project" value="UniProtKB-KW"/>
</dbReference>
<dbReference type="GO" id="GO:0032259">
    <property type="term" value="P:methylation"/>
    <property type="evidence" value="ECO:0007669"/>
    <property type="project" value="UniProtKB-KW"/>
</dbReference>
<dbReference type="Gene3D" id="3.40.50.150">
    <property type="entry name" value="Vaccinia Virus protein VP39"/>
    <property type="match status" value="1"/>
</dbReference>
<dbReference type="InterPro" id="IPR007213">
    <property type="entry name" value="Ppm1/Ppm2/Tcmp"/>
</dbReference>
<dbReference type="InterPro" id="IPR029063">
    <property type="entry name" value="SAM-dependent_MTases_sf"/>
</dbReference>
<dbReference type="InterPro" id="IPR011610">
    <property type="entry name" value="SAM_mthyl_Trfase_ML2640-like"/>
</dbReference>
<dbReference type="NCBIfam" id="TIGR00027">
    <property type="entry name" value="mthyl_TIGR00027"/>
    <property type="match status" value="1"/>
</dbReference>
<dbReference type="PANTHER" id="PTHR43619">
    <property type="entry name" value="S-ADENOSYL-L-METHIONINE-DEPENDENT METHYLTRANSFERASE YKTD-RELATED"/>
    <property type="match status" value="1"/>
</dbReference>
<dbReference type="PANTHER" id="PTHR43619:SF2">
    <property type="entry name" value="S-ADENOSYL-L-METHIONINE-DEPENDENT METHYLTRANSFERASES SUPERFAMILY PROTEIN"/>
    <property type="match status" value="1"/>
</dbReference>
<dbReference type="Pfam" id="PF04072">
    <property type="entry name" value="LCM"/>
    <property type="match status" value="1"/>
</dbReference>
<dbReference type="SUPFAM" id="SSF53335">
    <property type="entry name" value="S-adenosyl-L-methionine-dependent methyltransferases"/>
    <property type="match status" value="1"/>
</dbReference>
<proteinExistence type="inferred from homology"/>
<sequence>MARTEDDSWEITESVGATALGVASARAAETRSQHPLISDPFAQVFLDAVGDGVWNWHSAPQLPAELLEIEPDLPLQMEAMVSYMASRTAFFDEFFLDATRAGIGQAVILAAGLDSRAWRLPWPAGTTVFELDQPRVLEFKAATLAEHGAEPACGRVAVAVDLRQDWPTALRQAGFDPSVPSVWSAEGLMPYLPAVAQDLLFERVQGLTVRASRIAVEALGPKFLDPQVRANRSARMERIRAVMAHVEPQREIPRTDELWYFEEREDVGDWFRRHDWDVTVTPSGELMAGYGRAAAAQVEDRVPTNLFVAAQRK</sequence>
<name>Y955_MYCMM</name>
<feature type="chain" id="PRO_0000361175" description="Putative S-adenosyl-L-methionine-dependent methyltransferase MMAR_0955">
    <location>
        <begin position="1"/>
        <end position="313"/>
    </location>
</feature>
<feature type="binding site" evidence="1">
    <location>
        <position position="132"/>
    </location>
    <ligand>
        <name>S-adenosyl-L-methionine</name>
        <dbReference type="ChEBI" id="CHEBI:59789"/>
    </ligand>
</feature>
<feature type="binding site" evidence="1">
    <location>
        <begin position="161"/>
        <end position="162"/>
    </location>
    <ligand>
        <name>S-adenosyl-L-methionine</name>
        <dbReference type="ChEBI" id="CHEBI:59789"/>
    </ligand>
</feature>
<comment type="function">
    <text evidence="1">Exhibits S-adenosyl-L-methionine-dependent methyltransferase activity.</text>
</comment>
<comment type="similarity">
    <text evidence="2">Belongs to the UPF0677 family.</text>
</comment>
<organism>
    <name type="scientific">Mycobacterium marinum (strain ATCC BAA-535 / M)</name>
    <dbReference type="NCBI Taxonomy" id="216594"/>
    <lineage>
        <taxon>Bacteria</taxon>
        <taxon>Bacillati</taxon>
        <taxon>Actinomycetota</taxon>
        <taxon>Actinomycetes</taxon>
        <taxon>Mycobacteriales</taxon>
        <taxon>Mycobacteriaceae</taxon>
        <taxon>Mycobacterium</taxon>
        <taxon>Mycobacterium ulcerans group</taxon>
    </lineage>
</organism>
<protein>
    <recommendedName>
        <fullName>Putative S-adenosyl-L-methionine-dependent methyltransferase MMAR_0955</fullName>
        <ecNumber>2.1.1.-</ecNumber>
    </recommendedName>
</protein>
<gene>
    <name type="ordered locus">MMAR_0955</name>
</gene>